<proteinExistence type="inferred from homology"/>
<organism>
    <name type="scientific">Escherichia coli O6:H1 (strain CFT073 / ATCC 700928 / UPEC)</name>
    <dbReference type="NCBI Taxonomy" id="199310"/>
    <lineage>
        <taxon>Bacteria</taxon>
        <taxon>Pseudomonadati</taxon>
        <taxon>Pseudomonadota</taxon>
        <taxon>Gammaproteobacteria</taxon>
        <taxon>Enterobacterales</taxon>
        <taxon>Enterobacteriaceae</taxon>
        <taxon>Escherichia</taxon>
    </lineage>
</organism>
<dbReference type="EC" id="7.6.2.2"/>
<dbReference type="EMBL" id="AE014075">
    <property type="protein sequence ID" value="AAN79044.1"/>
    <property type="status" value="ALT_INIT"/>
    <property type="molecule type" value="Genomic_DNA"/>
</dbReference>
<dbReference type="RefSeq" id="WP_001256201.1">
    <property type="nucleotide sequence ID" value="NZ_CP051263.1"/>
</dbReference>
<dbReference type="SMR" id="P0AAG6"/>
<dbReference type="STRING" id="199310.c0566"/>
<dbReference type="KEGG" id="ecc:c0566"/>
<dbReference type="eggNOG" id="COG1132">
    <property type="taxonomic scope" value="Bacteria"/>
</dbReference>
<dbReference type="HOGENOM" id="CLU_000604_84_3_6"/>
<dbReference type="Proteomes" id="UP000001410">
    <property type="component" value="Chromosome"/>
</dbReference>
<dbReference type="GO" id="GO:0005886">
    <property type="term" value="C:plasma membrane"/>
    <property type="evidence" value="ECO:0007669"/>
    <property type="project" value="UniProtKB-SubCell"/>
</dbReference>
<dbReference type="GO" id="GO:0015421">
    <property type="term" value="F:ABC-type oligopeptide transporter activity"/>
    <property type="evidence" value="ECO:0007669"/>
    <property type="project" value="TreeGrafter"/>
</dbReference>
<dbReference type="GO" id="GO:0008559">
    <property type="term" value="F:ABC-type xenobiotic transporter activity"/>
    <property type="evidence" value="ECO:0007669"/>
    <property type="project" value="UniProtKB-EC"/>
</dbReference>
<dbReference type="GO" id="GO:0005524">
    <property type="term" value="F:ATP binding"/>
    <property type="evidence" value="ECO:0007669"/>
    <property type="project" value="UniProtKB-KW"/>
</dbReference>
<dbReference type="GO" id="GO:0016887">
    <property type="term" value="F:ATP hydrolysis activity"/>
    <property type="evidence" value="ECO:0007669"/>
    <property type="project" value="InterPro"/>
</dbReference>
<dbReference type="CDD" id="cd18544">
    <property type="entry name" value="ABC_6TM_TmrA_like"/>
    <property type="match status" value="1"/>
</dbReference>
<dbReference type="FunFam" id="1.20.1560.10:FF:000023">
    <property type="entry name" value="Multidrug ABC transporter ATP-binding protein"/>
    <property type="match status" value="1"/>
</dbReference>
<dbReference type="FunFam" id="3.40.50.300:FF:000834">
    <property type="entry name" value="Multidrug ABC transporter ATP-binding protein"/>
    <property type="match status" value="1"/>
</dbReference>
<dbReference type="Gene3D" id="1.20.1560.10">
    <property type="entry name" value="ABC transporter type 1, transmembrane domain"/>
    <property type="match status" value="1"/>
</dbReference>
<dbReference type="Gene3D" id="3.40.50.300">
    <property type="entry name" value="P-loop containing nucleotide triphosphate hydrolases"/>
    <property type="match status" value="1"/>
</dbReference>
<dbReference type="InterPro" id="IPR003593">
    <property type="entry name" value="AAA+_ATPase"/>
</dbReference>
<dbReference type="InterPro" id="IPR011527">
    <property type="entry name" value="ABC1_TM_dom"/>
</dbReference>
<dbReference type="InterPro" id="IPR036640">
    <property type="entry name" value="ABC1_TM_sf"/>
</dbReference>
<dbReference type="InterPro" id="IPR003439">
    <property type="entry name" value="ABC_transporter-like_ATP-bd"/>
</dbReference>
<dbReference type="InterPro" id="IPR017871">
    <property type="entry name" value="ABC_transporter-like_CS"/>
</dbReference>
<dbReference type="InterPro" id="IPR027417">
    <property type="entry name" value="P-loop_NTPase"/>
</dbReference>
<dbReference type="InterPro" id="IPR039421">
    <property type="entry name" value="Type_1_exporter"/>
</dbReference>
<dbReference type="NCBIfam" id="NF008056">
    <property type="entry name" value="PRK10790.1"/>
    <property type="match status" value="1"/>
</dbReference>
<dbReference type="PANTHER" id="PTHR43394:SF1">
    <property type="entry name" value="ATP-BINDING CASSETTE SUB-FAMILY B MEMBER 10, MITOCHONDRIAL"/>
    <property type="match status" value="1"/>
</dbReference>
<dbReference type="PANTHER" id="PTHR43394">
    <property type="entry name" value="ATP-DEPENDENT PERMEASE MDL1, MITOCHONDRIAL"/>
    <property type="match status" value="1"/>
</dbReference>
<dbReference type="Pfam" id="PF00664">
    <property type="entry name" value="ABC_membrane"/>
    <property type="match status" value="1"/>
</dbReference>
<dbReference type="Pfam" id="PF00005">
    <property type="entry name" value="ABC_tran"/>
    <property type="match status" value="1"/>
</dbReference>
<dbReference type="SMART" id="SM00382">
    <property type="entry name" value="AAA"/>
    <property type="match status" value="1"/>
</dbReference>
<dbReference type="SUPFAM" id="SSF90123">
    <property type="entry name" value="ABC transporter transmembrane region"/>
    <property type="match status" value="1"/>
</dbReference>
<dbReference type="SUPFAM" id="SSF52540">
    <property type="entry name" value="P-loop containing nucleoside triphosphate hydrolases"/>
    <property type="match status" value="1"/>
</dbReference>
<dbReference type="PROSITE" id="PS50929">
    <property type="entry name" value="ABC_TM1F"/>
    <property type="match status" value="1"/>
</dbReference>
<dbReference type="PROSITE" id="PS00211">
    <property type="entry name" value="ABC_TRANSPORTER_1"/>
    <property type="match status" value="1"/>
</dbReference>
<dbReference type="PROSITE" id="PS50893">
    <property type="entry name" value="ABC_TRANSPORTER_2"/>
    <property type="match status" value="1"/>
</dbReference>
<evidence type="ECO:0000250" key="1"/>
<evidence type="ECO:0000255" key="2"/>
<evidence type="ECO:0000255" key="3">
    <source>
        <dbReference type="PROSITE-ProRule" id="PRU00434"/>
    </source>
</evidence>
<evidence type="ECO:0000255" key="4">
    <source>
        <dbReference type="PROSITE-ProRule" id="PRU00441"/>
    </source>
</evidence>
<evidence type="ECO:0000305" key="5"/>
<sequence>MRSFSQLWPTLKRLLAYGSPWRKPLGIAVLMMWVAAAAEVSGPLLISYFIDNMVAKNNLPLKVVAGLAAAYVGLQLFAAGLHYAQSLLFNRAAVGVVQQLRTDVMDAALRQPLSEFDTQPVGQVISRVTNDTEVIRDLYVTVVATVLRSAALVGAMLVAMFSLDWRMALVAIMIFPVVLVVMVIYQRYSTPIVRRVRAYLADINDGFNEIINGMSVIQQFRQQARFGERMGEASRSHYMARMQTLRLDGFLLRPLLSLFSSLILCGLLMLFGFSASGTIEVGVLYAFISYLGRLNEPLIELTTQQAMLQQAVVAGERVFELMDGPRQQYGNDDRPLQSGTIEVDNVSFAYRDDNLVLKNINLSVPSRNFVALVGHTGSGKSTLASLLMGYYPLTEGEIRLDGRPLSSLSHSALRQGVAMVQQDPVVLADTFLANVTLGRDISEERVWQALETVQLAELARSMSDGIYTPLGEQGNNLSVGQKQLLALARVLVETPQILILDEATASIDSGTEQAIQHALAAVREHTTLVVIAHRLSTIVDADTILVLHRGQAVEQGTHQQLLAAQGRYWQMYQLQLAGEELAASVREEESLSA</sequence>
<protein>
    <recommendedName>
        <fullName>Multidrug resistance-like ATP-binding protein MdlB</fullName>
        <ecNumber>7.6.2.2</ecNumber>
    </recommendedName>
</protein>
<keyword id="KW-0067">ATP-binding</keyword>
<keyword id="KW-0997">Cell inner membrane</keyword>
<keyword id="KW-1003">Cell membrane</keyword>
<keyword id="KW-0472">Membrane</keyword>
<keyword id="KW-0547">Nucleotide-binding</keyword>
<keyword id="KW-1185">Reference proteome</keyword>
<keyword id="KW-1278">Translocase</keyword>
<keyword id="KW-0812">Transmembrane</keyword>
<keyword id="KW-1133">Transmembrane helix</keyword>
<keyword id="KW-0813">Transport</keyword>
<accession>P0AAG6</accession>
<accession>P30751</accession>
<accession>P75706</accession>
<accession>P77117</accession>
<feature type="chain" id="PRO_0000092498" description="Multidrug resistance-like ATP-binding protein MdlB">
    <location>
        <begin position="1"/>
        <end position="593"/>
    </location>
</feature>
<feature type="topological domain" description="Cytoplasmic" evidence="2">
    <location>
        <begin position="1"/>
        <end position="25"/>
    </location>
</feature>
<feature type="transmembrane region" description="Helical" evidence="4">
    <location>
        <begin position="26"/>
        <end position="46"/>
    </location>
</feature>
<feature type="topological domain" description="Periplasmic" evidence="2">
    <location>
        <begin position="47"/>
        <end position="62"/>
    </location>
</feature>
<feature type="transmembrane region" description="Helical" evidence="4">
    <location>
        <begin position="63"/>
        <end position="83"/>
    </location>
</feature>
<feature type="topological domain" description="Cytoplasmic" evidence="2">
    <location>
        <begin position="84"/>
        <end position="140"/>
    </location>
</feature>
<feature type="transmembrane region" description="Helical" evidence="4">
    <location>
        <begin position="141"/>
        <end position="161"/>
    </location>
</feature>
<feature type="topological domain" description="Periplasmic" evidence="2">
    <location>
        <begin position="162"/>
        <end position="164"/>
    </location>
</feature>
<feature type="transmembrane region" description="Helical" evidence="4">
    <location>
        <begin position="165"/>
        <end position="185"/>
    </location>
</feature>
<feature type="topological domain" description="Cytoplasmic" evidence="2">
    <location>
        <begin position="186"/>
        <end position="254"/>
    </location>
</feature>
<feature type="transmembrane region" description="Helical" evidence="4">
    <location>
        <begin position="255"/>
        <end position="275"/>
    </location>
</feature>
<feature type="topological domain" description="Periplasmic" evidence="2">
    <location>
        <begin position="276"/>
        <end position="278"/>
    </location>
</feature>
<feature type="transmembrane region" description="Helical" evidence="4">
    <location>
        <begin position="279"/>
        <end position="299"/>
    </location>
</feature>
<feature type="topological domain" description="Cytoplasmic" evidence="2">
    <location>
        <begin position="300"/>
        <end position="593"/>
    </location>
</feature>
<feature type="domain" description="ABC transmembrane type-1" evidence="4">
    <location>
        <begin position="25"/>
        <end position="310"/>
    </location>
</feature>
<feature type="domain" description="ABC transporter" evidence="3">
    <location>
        <begin position="341"/>
        <end position="574"/>
    </location>
</feature>
<feature type="binding site" evidence="3">
    <location>
        <begin position="374"/>
        <end position="381"/>
    </location>
    <ligand>
        <name>ATP</name>
        <dbReference type="ChEBI" id="CHEBI:30616"/>
    </ligand>
</feature>
<comment type="catalytic activity">
    <reaction>
        <text>ATP + H2O + xenobioticSide 1 = ADP + phosphate + xenobioticSide 2.</text>
        <dbReference type="EC" id="7.6.2.2"/>
    </reaction>
</comment>
<comment type="subcellular location">
    <subcellularLocation>
        <location evidence="1">Cell inner membrane</location>
        <topology evidence="4">Multi-pass membrane protein</topology>
    </subcellularLocation>
</comment>
<comment type="similarity">
    <text evidence="5">Belongs to the ABC transporter superfamily. Drug exporter-2 (TC 3.A.1.117) family.</text>
</comment>
<comment type="sequence caution" evidence="5">
    <conflict type="erroneous initiation">
        <sequence resource="EMBL-CDS" id="AAN79044"/>
    </conflict>
</comment>
<reference key="1">
    <citation type="journal article" date="2002" name="Proc. Natl. Acad. Sci. U.S.A.">
        <title>Extensive mosaic structure revealed by the complete genome sequence of uropathogenic Escherichia coli.</title>
        <authorList>
            <person name="Welch R.A."/>
            <person name="Burland V."/>
            <person name="Plunkett G. III"/>
            <person name="Redford P."/>
            <person name="Roesch P."/>
            <person name="Rasko D."/>
            <person name="Buckles E.L."/>
            <person name="Liou S.-R."/>
            <person name="Boutin A."/>
            <person name="Hackett J."/>
            <person name="Stroud D."/>
            <person name="Mayhew G.F."/>
            <person name="Rose D.J."/>
            <person name="Zhou S."/>
            <person name="Schwartz D.C."/>
            <person name="Perna N.T."/>
            <person name="Mobley H.L.T."/>
            <person name="Donnenberg M.S."/>
            <person name="Blattner F.R."/>
        </authorList>
    </citation>
    <scope>NUCLEOTIDE SEQUENCE [LARGE SCALE GENOMIC DNA]</scope>
    <source>
        <strain>CFT073 / ATCC 700928 / UPEC</strain>
    </source>
</reference>
<gene>
    <name type="primary">mdlB</name>
    <name type="ordered locus">c0566</name>
</gene>
<name>MDLB_ECOL6</name>